<feature type="signal peptide" evidence="1">
    <location>
        <begin position="1"/>
        <end position="23"/>
    </location>
</feature>
<feature type="chain" id="PRO_0000041390" description="WAP four-disulfide core domain protein 12">
    <location>
        <begin position="24"/>
        <end position="111"/>
    </location>
</feature>
<feature type="domain" description="WAP" evidence="2">
    <location>
        <begin position="27"/>
        <end position="74"/>
    </location>
</feature>
<feature type="region of interest" description="Disordered" evidence="3">
    <location>
        <begin position="80"/>
        <end position="111"/>
    </location>
</feature>
<feature type="compositionally biased region" description="Polar residues" evidence="3">
    <location>
        <begin position="102"/>
        <end position="111"/>
    </location>
</feature>
<feature type="disulfide bond" evidence="2">
    <location>
        <begin position="34"/>
        <end position="62"/>
    </location>
</feature>
<feature type="disulfide bond" evidence="2">
    <location>
        <begin position="41"/>
        <end position="66"/>
    </location>
</feature>
<feature type="disulfide bond" evidence="2">
    <location>
        <begin position="49"/>
        <end position="61"/>
    </location>
</feature>
<feature type="disulfide bond" evidence="2">
    <location>
        <begin position="55"/>
        <end position="70"/>
    </location>
</feature>
<evidence type="ECO:0000255" key="1"/>
<evidence type="ECO:0000255" key="2">
    <source>
        <dbReference type="PROSITE-ProRule" id="PRU00722"/>
    </source>
</evidence>
<evidence type="ECO:0000256" key="3">
    <source>
        <dbReference type="SAM" id="MobiDB-lite"/>
    </source>
</evidence>
<evidence type="ECO:0000305" key="4"/>
<reference key="1">
    <citation type="journal article" date="2002" name="Biochem. Biophys. Res. Commun.">
        <title>Identification of a novel protease inhibitor gene that is highly expressed in the prostate.</title>
        <authorList>
            <person name="Lundwall A."/>
            <person name="Clauss A."/>
        </authorList>
    </citation>
    <scope>NUCLEOTIDE SEQUENCE [MRNA]</scope>
</reference>
<reference key="2">
    <citation type="journal article" date="2003" name="Genome Res.">
        <title>The secreted protein discovery initiative (SPDI), a large-scale effort to identify novel human secreted and transmembrane proteins: a bioinformatics assessment.</title>
        <authorList>
            <person name="Clark H.F."/>
            <person name="Gurney A.L."/>
            <person name="Abaya E."/>
            <person name="Baker K."/>
            <person name="Baldwin D.T."/>
            <person name="Brush J."/>
            <person name="Chen J."/>
            <person name="Chow B."/>
            <person name="Chui C."/>
            <person name="Crowley C."/>
            <person name="Currell B."/>
            <person name="Deuel B."/>
            <person name="Dowd P."/>
            <person name="Eaton D."/>
            <person name="Foster J.S."/>
            <person name="Grimaldi C."/>
            <person name="Gu Q."/>
            <person name="Hass P.E."/>
            <person name="Heldens S."/>
            <person name="Huang A."/>
            <person name="Kim H.S."/>
            <person name="Klimowski L."/>
            <person name="Jin Y."/>
            <person name="Johnson S."/>
            <person name="Lee J."/>
            <person name="Lewis L."/>
            <person name="Liao D."/>
            <person name="Mark M.R."/>
            <person name="Robbie E."/>
            <person name="Sanchez C."/>
            <person name="Schoenfeld J."/>
            <person name="Seshagiri S."/>
            <person name="Simmons L."/>
            <person name="Singh J."/>
            <person name="Smith V."/>
            <person name="Stinson J."/>
            <person name="Vagts A."/>
            <person name="Vandlen R.L."/>
            <person name="Watanabe C."/>
            <person name="Wieand D."/>
            <person name="Woods K."/>
            <person name="Xie M.-H."/>
            <person name="Yansura D.G."/>
            <person name="Yi S."/>
            <person name="Yu G."/>
            <person name="Yuan J."/>
            <person name="Zhang M."/>
            <person name="Zhang Z."/>
            <person name="Goddard A.D."/>
            <person name="Wood W.I."/>
            <person name="Godowski P.J."/>
            <person name="Gray A.M."/>
        </authorList>
    </citation>
    <scope>NUCLEOTIDE SEQUENCE [LARGE SCALE MRNA]</scope>
</reference>
<reference key="3">
    <citation type="journal article" date="2001" name="Nature">
        <title>The DNA sequence and comparative analysis of human chromosome 20.</title>
        <authorList>
            <person name="Deloukas P."/>
            <person name="Matthews L.H."/>
            <person name="Ashurst J.L."/>
            <person name="Burton J."/>
            <person name="Gilbert J.G.R."/>
            <person name="Jones M."/>
            <person name="Stavrides G."/>
            <person name="Almeida J.P."/>
            <person name="Babbage A.K."/>
            <person name="Bagguley C.L."/>
            <person name="Bailey J."/>
            <person name="Barlow K.F."/>
            <person name="Bates K.N."/>
            <person name="Beard L.M."/>
            <person name="Beare D.M."/>
            <person name="Beasley O.P."/>
            <person name="Bird C.P."/>
            <person name="Blakey S.E."/>
            <person name="Bridgeman A.M."/>
            <person name="Brown A.J."/>
            <person name="Buck D."/>
            <person name="Burrill W.D."/>
            <person name="Butler A.P."/>
            <person name="Carder C."/>
            <person name="Carter N.P."/>
            <person name="Chapman J.C."/>
            <person name="Clamp M."/>
            <person name="Clark G."/>
            <person name="Clark L.N."/>
            <person name="Clark S.Y."/>
            <person name="Clee C.M."/>
            <person name="Clegg S."/>
            <person name="Cobley V.E."/>
            <person name="Collier R.E."/>
            <person name="Connor R.E."/>
            <person name="Corby N.R."/>
            <person name="Coulson A."/>
            <person name="Coville G.J."/>
            <person name="Deadman R."/>
            <person name="Dhami P.D."/>
            <person name="Dunn M."/>
            <person name="Ellington A.G."/>
            <person name="Frankland J.A."/>
            <person name="Fraser A."/>
            <person name="French L."/>
            <person name="Garner P."/>
            <person name="Grafham D.V."/>
            <person name="Griffiths C."/>
            <person name="Griffiths M.N.D."/>
            <person name="Gwilliam R."/>
            <person name="Hall R.E."/>
            <person name="Hammond S."/>
            <person name="Harley J.L."/>
            <person name="Heath P.D."/>
            <person name="Ho S."/>
            <person name="Holden J.L."/>
            <person name="Howden P.J."/>
            <person name="Huckle E."/>
            <person name="Hunt A.R."/>
            <person name="Hunt S.E."/>
            <person name="Jekosch K."/>
            <person name="Johnson C.M."/>
            <person name="Johnson D."/>
            <person name="Kay M.P."/>
            <person name="Kimberley A.M."/>
            <person name="King A."/>
            <person name="Knights A."/>
            <person name="Laird G.K."/>
            <person name="Lawlor S."/>
            <person name="Lehvaeslaiho M.H."/>
            <person name="Leversha M.A."/>
            <person name="Lloyd C."/>
            <person name="Lloyd D.M."/>
            <person name="Lovell J.D."/>
            <person name="Marsh V.L."/>
            <person name="Martin S.L."/>
            <person name="McConnachie L.J."/>
            <person name="McLay K."/>
            <person name="McMurray A.A."/>
            <person name="Milne S.A."/>
            <person name="Mistry D."/>
            <person name="Moore M.J.F."/>
            <person name="Mullikin J.C."/>
            <person name="Nickerson T."/>
            <person name="Oliver K."/>
            <person name="Parker A."/>
            <person name="Patel R."/>
            <person name="Pearce T.A.V."/>
            <person name="Peck A.I."/>
            <person name="Phillimore B.J.C.T."/>
            <person name="Prathalingam S.R."/>
            <person name="Plumb R.W."/>
            <person name="Ramsay H."/>
            <person name="Rice C.M."/>
            <person name="Ross M.T."/>
            <person name="Scott C.E."/>
            <person name="Sehra H.K."/>
            <person name="Shownkeen R."/>
            <person name="Sims S."/>
            <person name="Skuce C.D."/>
            <person name="Smith M.L."/>
            <person name="Soderlund C."/>
            <person name="Steward C.A."/>
            <person name="Sulston J.E."/>
            <person name="Swann R.M."/>
            <person name="Sycamore N."/>
            <person name="Taylor R."/>
            <person name="Tee L."/>
            <person name="Thomas D.W."/>
            <person name="Thorpe A."/>
            <person name="Tracey A."/>
            <person name="Tromans A.C."/>
            <person name="Vaudin M."/>
            <person name="Wall M."/>
            <person name="Wallis J.M."/>
            <person name="Whitehead S.L."/>
            <person name="Whittaker P."/>
            <person name="Willey D.L."/>
            <person name="Williams L."/>
            <person name="Williams S.A."/>
            <person name="Wilming L."/>
            <person name="Wray P.W."/>
            <person name="Hubbard T."/>
            <person name="Durbin R.M."/>
            <person name="Bentley D.R."/>
            <person name="Beck S."/>
            <person name="Rogers J."/>
        </authorList>
    </citation>
    <scope>NUCLEOTIDE SEQUENCE [LARGE SCALE GENOMIC DNA]</scope>
</reference>
<proteinExistence type="evidence at protein level"/>
<protein>
    <recommendedName>
        <fullName>WAP four-disulfide core domain protein 12</fullName>
    </recommendedName>
    <alternativeName>
        <fullName>Putative protease inhibitor WAP12</fullName>
    </alternativeName>
    <alternativeName>
        <fullName>Whey acidic protein 2</fullName>
    </alternativeName>
</protein>
<keyword id="KW-0044">Antibiotic</keyword>
<keyword id="KW-0929">Antimicrobial</keyword>
<keyword id="KW-1015">Disulfide bond</keyword>
<keyword id="KW-0646">Protease inhibitor</keyword>
<keyword id="KW-1267">Proteomics identification</keyword>
<keyword id="KW-1185">Reference proteome</keyword>
<keyword id="KW-0964">Secreted</keyword>
<keyword id="KW-0722">Serine protease inhibitor</keyword>
<keyword id="KW-0732">Signal</keyword>
<gene>
    <name type="primary">WFDC12</name>
    <name type="synonym">C20orf122</name>
    <name type="synonym">WAP2</name>
    <name type="ORF">UNQ544/PRO844</name>
</gene>
<comment type="function">
    <text>Antibacterial protein. Putative acid-stable proteinase inhibitor.</text>
</comment>
<comment type="interaction">
    <interactant intactId="EBI-11958577">
        <id>Q8WWY7</id>
    </interactant>
    <interactant intactId="EBI-12092171">
        <id>Q12797-6</id>
        <label>ASPH</label>
    </interactant>
    <organismsDiffer>false</organismsDiffer>
    <experiments>3</experiments>
</comment>
<comment type="interaction">
    <interactant intactId="EBI-11958577">
        <id>Q8WWY7</id>
    </interactant>
    <interactant intactId="EBI-347996">
        <id>O43765</id>
        <label>SGTA</label>
    </interactant>
    <organismsDiffer>false</organismsDiffer>
    <experiments>3</experiments>
</comment>
<comment type="interaction">
    <interactant intactId="EBI-11958577">
        <id>Q8WWY7</id>
    </interactant>
    <interactant intactId="EBI-744081">
        <id>Q96EQ0</id>
        <label>SGTB</label>
    </interactant>
    <organismsDiffer>false</organismsDiffer>
    <experiments>3</experiments>
</comment>
<comment type="interaction">
    <interactant intactId="EBI-11958577">
        <id>Q8WWY7</id>
    </interactant>
    <interactant intactId="EBI-1051105">
        <id>Q92504</id>
        <label>SLC39A7</label>
    </interactant>
    <organismsDiffer>false</organismsDiffer>
    <experiments>3</experiments>
</comment>
<comment type="interaction">
    <interactant intactId="EBI-11958577">
        <id>Q8WWY7</id>
    </interactant>
    <interactant intactId="EBI-741480">
        <id>Q9UMX0</id>
        <label>UBQLN1</label>
    </interactant>
    <organismsDiffer>false</organismsDiffer>
    <experiments>3</experiments>
</comment>
<comment type="interaction">
    <interactant intactId="EBI-11958577">
        <id>Q8WWY7</id>
    </interactant>
    <interactant intactId="EBI-947187">
        <id>Q9UHD9</id>
        <label>UBQLN2</label>
    </interactant>
    <organismsDiffer>false</organismsDiffer>
    <experiments>6</experiments>
</comment>
<comment type="subcellular location">
    <subcellularLocation>
        <location evidence="4">Secreted</location>
    </subcellularLocation>
</comment>
<comment type="tissue specificity">
    <text>Highly expressed in prostate, skin, lung and esophagus. Weakly expressed in skeletal muscle, epididymis, kidney, trachea, salivary gland, testis and seminal vesicle.</text>
</comment>
<organism>
    <name type="scientific">Homo sapiens</name>
    <name type="common">Human</name>
    <dbReference type="NCBI Taxonomy" id="9606"/>
    <lineage>
        <taxon>Eukaryota</taxon>
        <taxon>Metazoa</taxon>
        <taxon>Chordata</taxon>
        <taxon>Craniata</taxon>
        <taxon>Vertebrata</taxon>
        <taxon>Euteleostomi</taxon>
        <taxon>Mammalia</taxon>
        <taxon>Eutheria</taxon>
        <taxon>Euarchontoglires</taxon>
        <taxon>Primates</taxon>
        <taxon>Haplorrhini</taxon>
        <taxon>Catarrhini</taxon>
        <taxon>Hominidae</taxon>
        <taxon>Homo</taxon>
    </lineage>
</organism>
<dbReference type="EMBL" id="AY037803">
    <property type="protein sequence ID" value="AAK68848.1"/>
    <property type="molecule type" value="mRNA"/>
</dbReference>
<dbReference type="EMBL" id="AY358678">
    <property type="protein sequence ID" value="AAQ89041.1"/>
    <property type="molecule type" value="mRNA"/>
</dbReference>
<dbReference type="EMBL" id="Z93016">
    <property type="status" value="NOT_ANNOTATED_CDS"/>
    <property type="molecule type" value="Genomic_DNA"/>
</dbReference>
<dbReference type="CCDS" id="CCDS13343.1"/>
<dbReference type="RefSeq" id="NP_543145.1">
    <property type="nucleotide sequence ID" value="NM_080869.2"/>
</dbReference>
<dbReference type="SMR" id="Q8WWY7"/>
<dbReference type="BioGRID" id="126126">
    <property type="interactions" value="7"/>
</dbReference>
<dbReference type="FunCoup" id="Q8WWY7">
    <property type="interactions" value="1"/>
</dbReference>
<dbReference type="IntAct" id="Q8WWY7">
    <property type="interactions" value="7"/>
</dbReference>
<dbReference type="STRING" id="9606.ENSP00000361871"/>
<dbReference type="MEROPS" id="I17.003"/>
<dbReference type="iPTMnet" id="Q8WWY7"/>
<dbReference type="PhosphoSitePlus" id="Q8WWY7"/>
<dbReference type="BioMuta" id="WFDC12"/>
<dbReference type="DMDM" id="24212610"/>
<dbReference type="MassIVE" id="Q8WWY7"/>
<dbReference type="PaxDb" id="9606-ENSP00000361871"/>
<dbReference type="PeptideAtlas" id="Q8WWY7"/>
<dbReference type="ProteomicsDB" id="74959"/>
<dbReference type="Antibodypedia" id="53770">
    <property type="antibodies" value="61 antibodies from 17 providers"/>
</dbReference>
<dbReference type="DNASU" id="128488"/>
<dbReference type="Ensembl" id="ENST00000372785.3">
    <property type="protein sequence ID" value="ENSP00000361871.3"/>
    <property type="gene ID" value="ENSG00000168703.5"/>
</dbReference>
<dbReference type="GeneID" id="128488"/>
<dbReference type="KEGG" id="hsa:128488"/>
<dbReference type="MANE-Select" id="ENST00000372785.3">
    <property type="protein sequence ID" value="ENSP00000361871.3"/>
    <property type="RefSeq nucleotide sequence ID" value="NM_080869.2"/>
    <property type="RefSeq protein sequence ID" value="NP_543145.1"/>
</dbReference>
<dbReference type="UCSC" id="uc002xnf.2">
    <property type="organism name" value="human"/>
</dbReference>
<dbReference type="AGR" id="HGNC:16115"/>
<dbReference type="CTD" id="128488"/>
<dbReference type="DisGeNET" id="128488"/>
<dbReference type="GeneCards" id="WFDC12"/>
<dbReference type="HGNC" id="HGNC:16115">
    <property type="gene designation" value="WFDC12"/>
</dbReference>
<dbReference type="HPA" id="ENSG00000168703">
    <property type="expression patterns" value="Tissue enriched (skin)"/>
</dbReference>
<dbReference type="MIM" id="609872">
    <property type="type" value="gene"/>
</dbReference>
<dbReference type="neXtProt" id="NX_Q8WWY7"/>
<dbReference type="OpenTargets" id="ENSG00000168703"/>
<dbReference type="PharmGKB" id="PA25663"/>
<dbReference type="VEuPathDB" id="HostDB:ENSG00000168703"/>
<dbReference type="eggNOG" id="ENOG502TDXW">
    <property type="taxonomic scope" value="Eukaryota"/>
</dbReference>
<dbReference type="GeneTree" id="ENSGT00390000012286"/>
<dbReference type="HOGENOM" id="CLU_172659_0_0_1"/>
<dbReference type="InParanoid" id="Q8WWY7"/>
<dbReference type="OMA" id="CIKSDPP"/>
<dbReference type="OrthoDB" id="4473401at2759"/>
<dbReference type="PAN-GO" id="Q8WWY7">
    <property type="GO annotations" value="4 GO annotations based on evolutionary models"/>
</dbReference>
<dbReference type="PhylomeDB" id="Q8WWY7"/>
<dbReference type="TreeFam" id="TF338375"/>
<dbReference type="PathwayCommons" id="Q8WWY7"/>
<dbReference type="SignaLink" id="Q8WWY7"/>
<dbReference type="BioGRID-ORCS" id="128488">
    <property type="hits" value="8 hits in 1138 CRISPR screens"/>
</dbReference>
<dbReference type="GenomeRNAi" id="128488"/>
<dbReference type="Pharos" id="Q8WWY7">
    <property type="development level" value="Tbio"/>
</dbReference>
<dbReference type="PRO" id="PR:Q8WWY7"/>
<dbReference type="Proteomes" id="UP000005640">
    <property type="component" value="Chromosome 20"/>
</dbReference>
<dbReference type="RNAct" id="Q8WWY7">
    <property type="molecule type" value="protein"/>
</dbReference>
<dbReference type="Bgee" id="ENSG00000168703">
    <property type="expression patterns" value="Expressed in penis and 82 other cell types or tissues"/>
</dbReference>
<dbReference type="GO" id="GO:0005615">
    <property type="term" value="C:extracellular space"/>
    <property type="evidence" value="ECO:0000318"/>
    <property type="project" value="GO_Central"/>
</dbReference>
<dbReference type="GO" id="GO:0004867">
    <property type="term" value="F:serine-type endopeptidase inhibitor activity"/>
    <property type="evidence" value="ECO:0000318"/>
    <property type="project" value="GO_Central"/>
</dbReference>
<dbReference type="GO" id="GO:0019731">
    <property type="term" value="P:antibacterial humoral response"/>
    <property type="evidence" value="ECO:0000318"/>
    <property type="project" value="GO_Central"/>
</dbReference>
<dbReference type="GO" id="GO:0042742">
    <property type="term" value="P:defense response to bacterium"/>
    <property type="evidence" value="ECO:0000250"/>
    <property type="project" value="UniProtKB"/>
</dbReference>
<dbReference type="GO" id="GO:0045087">
    <property type="term" value="P:innate immune response"/>
    <property type="evidence" value="ECO:0000318"/>
    <property type="project" value="GO_Central"/>
</dbReference>
<dbReference type="FunFam" id="4.10.75.10:FF:000005">
    <property type="entry name" value="WAP four-disulfide core domain protein 12"/>
    <property type="match status" value="1"/>
</dbReference>
<dbReference type="Gene3D" id="4.10.75.10">
    <property type="entry name" value="Elafin-like"/>
    <property type="match status" value="1"/>
</dbReference>
<dbReference type="InterPro" id="IPR036645">
    <property type="entry name" value="Elafin-like_sf"/>
</dbReference>
<dbReference type="InterPro" id="IPR008197">
    <property type="entry name" value="WAP_dom"/>
</dbReference>
<dbReference type="PANTHER" id="PTHR47769">
    <property type="entry name" value="WAP FOUR-DISULFIDE CORE DOMAIN PROTEIN 8"/>
    <property type="match status" value="1"/>
</dbReference>
<dbReference type="PANTHER" id="PTHR47769:SF1">
    <property type="entry name" value="WAP FOUR-DISULFIDE CORE DOMAIN PROTEIN 8"/>
    <property type="match status" value="1"/>
</dbReference>
<dbReference type="Pfam" id="PF00095">
    <property type="entry name" value="WAP"/>
    <property type="match status" value="1"/>
</dbReference>
<dbReference type="PRINTS" id="PR00003">
    <property type="entry name" value="4DISULPHCORE"/>
</dbReference>
<dbReference type="SMART" id="SM00217">
    <property type="entry name" value="WAP"/>
    <property type="match status" value="1"/>
</dbReference>
<dbReference type="SUPFAM" id="SSF57256">
    <property type="entry name" value="Elafin-like"/>
    <property type="match status" value="1"/>
</dbReference>
<dbReference type="PROSITE" id="PS51390">
    <property type="entry name" value="WAP"/>
    <property type="match status" value="1"/>
</dbReference>
<sequence>MGSSSFLVLMVSLVLVTLVAVEGVKEGIEKAGVCPADNVRCFKSDPPQCHTDQDCLGERKCCYLHCGFKCVIPVKELEEGGNKDEDVSRPYPEPGWEAKCPGSSSTRCPQK</sequence>
<accession>Q8WWY7</accession>
<accession>Q5H980</accession>
<accession>Q9BR31</accession>
<name>WFD12_HUMAN</name>